<evidence type="ECO:0000255" key="1">
    <source>
        <dbReference type="HAMAP-Rule" id="MF_01431"/>
    </source>
</evidence>
<proteinExistence type="inferred from homology"/>
<name>RIHA_ECOLU</name>
<keyword id="KW-0326">Glycosidase</keyword>
<keyword id="KW-0378">Hydrolase</keyword>
<protein>
    <recommendedName>
        <fullName evidence="1">Pyrimidine-specific ribonucleoside hydrolase RihA</fullName>
        <ecNumber evidence="1">3.2.-.-</ecNumber>
    </recommendedName>
    <alternativeName>
        <fullName evidence="1">Cytidine/uridine-specific hydrolase</fullName>
    </alternativeName>
</protein>
<reference key="1">
    <citation type="journal article" date="2009" name="PLoS Genet.">
        <title>Organised genome dynamics in the Escherichia coli species results in highly diverse adaptive paths.</title>
        <authorList>
            <person name="Touchon M."/>
            <person name="Hoede C."/>
            <person name="Tenaillon O."/>
            <person name="Barbe V."/>
            <person name="Baeriswyl S."/>
            <person name="Bidet P."/>
            <person name="Bingen E."/>
            <person name="Bonacorsi S."/>
            <person name="Bouchier C."/>
            <person name="Bouvet O."/>
            <person name="Calteau A."/>
            <person name="Chiapello H."/>
            <person name="Clermont O."/>
            <person name="Cruveiller S."/>
            <person name="Danchin A."/>
            <person name="Diard M."/>
            <person name="Dossat C."/>
            <person name="Karoui M.E."/>
            <person name="Frapy E."/>
            <person name="Garry L."/>
            <person name="Ghigo J.M."/>
            <person name="Gilles A.M."/>
            <person name="Johnson J."/>
            <person name="Le Bouguenec C."/>
            <person name="Lescat M."/>
            <person name="Mangenot S."/>
            <person name="Martinez-Jehanne V."/>
            <person name="Matic I."/>
            <person name="Nassif X."/>
            <person name="Oztas S."/>
            <person name="Petit M.A."/>
            <person name="Pichon C."/>
            <person name="Rouy Z."/>
            <person name="Ruf C.S."/>
            <person name="Schneider D."/>
            <person name="Tourret J."/>
            <person name="Vacherie B."/>
            <person name="Vallenet D."/>
            <person name="Medigue C."/>
            <person name="Rocha E.P.C."/>
            <person name="Denamur E."/>
        </authorList>
    </citation>
    <scope>NUCLEOTIDE SEQUENCE [LARGE SCALE GENOMIC DNA]</scope>
    <source>
        <strain>UMN026 / ExPEC</strain>
    </source>
</reference>
<accession>B7N9Q7</accession>
<sequence>MALPILLDCDPGHDDAIAIVLALASPELDVKAITSSAGNQTPEKTLRNVLRMLTLLNRTDIPVAGGAVKPLMRELIIADNVHGESGLDGPALPEPTFAPQNCTAVELMAKTLRESAEPVTIVSTGPQTNVALLLNSHPELHSKIARIVIMGGAMGLGNWTPAAEFNIYVDPEAAEIVFQSGIPVVMAGLDVTHKAQIHVEDTERFRAIGNPVSTIVAELLDFFLEYHKDEKWGFVGAPLHDPCTIAWLLKPELFTTVERWVGVETQGKYTQGMTVVDYYYLTGNKPNASVMVDVDRQGFVDLLADRLKFYA</sequence>
<feature type="chain" id="PRO_1000145793" description="Pyrimidine-specific ribonucleoside hydrolase RihA">
    <location>
        <begin position="1"/>
        <end position="311"/>
    </location>
</feature>
<feature type="active site" evidence="1">
    <location>
        <position position="240"/>
    </location>
</feature>
<gene>
    <name evidence="1" type="primary">rihA</name>
    <name type="ordered locus">ECUMN_0745</name>
</gene>
<dbReference type="EC" id="3.2.-.-" evidence="1"/>
<dbReference type="EMBL" id="CU928163">
    <property type="protein sequence ID" value="CAR11958.1"/>
    <property type="molecule type" value="Genomic_DNA"/>
</dbReference>
<dbReference type="RefSeq" id="WP_001207525.1">
    <property type="nucleotide sequence ID" value="NC_011751.1"/>
</dbReference>
<dbReference type="RefSeq" id="YP_002411504.1">
    <property type="nucleotide sequence ID" value="NC_011751.1"/>
</dbReference>
<dbReference type="SMR" id="B7N9Q7"/>
<dbReference type="STRING" id="585056.ECUMN_0745"/>
<dbReference type="KEGG" id="eum:ECUMN_0745"/>
<dbReference type="PATRIC" id="fig|585056.7.peg.943"/>
<dbReference type="HOGENOM" id="CLU_036838_2_0_6"/>
<dbReference type="Proteomes" id="UP000007097">
    <property type="component" value="Chromosome"/>
</dbReference>
<dbReference type="GO" id="GO:0005829">
    <property type="term" value="C:cytosol"/>
    <property type="evidence" value="ECO:0007669"/>
    <property type="project" value="TreeGrafter"/>
</dbReference>
<dbReference type="GO" id="GO:0008477">
    <property type="term" value="F:purine nucleosidase activity"/>
    <property type="evidence" value="ECO:0007669"/>
    <property type="project" value="TreeGrafter"/>
</dbReference>
<dbReference type="GO" id="GO:0045437">
    <property type="term" value="F:uridine nucleosidase activity"/>
    <property type="evidence" value="ECO:0007669"/>
    <property type="project" value="InterPro"/>
</dbReference>
<dbReference type="GO" id="GO:0015949">
    <property type="term" value="P:nucleobase-containing small molecule interconversion"/>
    <property type="evidence" value="ECO:0007669"/>
    <property type="project" value="InterPro"/>
</dbReference>
<dbReference type="GO" id="GO:0006152">
    <property type="term" value="P:purine nucleoside catabolic process"/>
    <property type="evidence" value="ECO:0007669"/>
    <property type="project" value="TreeGrafter"/>
</dbReference>
<dbReference type="GO" id="GO:0006206">
    <property type="term" value="P:pyrimidine nucleobase metabolic process"/>
    <property type="evidence" value="ECO:0007669"/>
    <property type="project" value="UniProtKB-UniRule"/>
</dbReference>
<dbReference type="CDD" id="cd02651">
    <property type="entry name" value="nuc_hydro_IU_UC_XIUA"/>
    <property type="match status" value="1"/>
</dbReference>
<dbReference type="FunFam" id="3.90.245.10:FF:000001">
    <property type="entry name" value="Pyrimidine-specific ribonucleoside hydrolase RihA"/>
    <property type="match status" value="1"/>
</dbReference>
<dbReference type="Gene3D" id="3.90.245.10">
    <property type="entry name" value="Ribonucleoside hydrolase-like"/>
    <property type="match status" value="1"/>
</dbReference>
<dbReference type="HAMAP" id="MF_01431">
    <property type="entry name" value="Pyrim_hydro_RihA"/>
    <property type="match status" value="1"/>
</dbReference>
<dbReference type="InterPro" id="IPR015910">
    <property type="entry name" value="I/U_nuclsd_hydro_CS"/>
</dbReference>
<dbReference type="InterPro" id="IPR001910">
    <property type="entry name" value="Inosine/uridine_hydrolase_dom"/>
</dbReference>
<dbReference type="InterPro" id="IPR023186">
    <property type="entry name" value="IUNH"/>
</dbReference>
<dbReference type="InterPro" id="IPR022975">
    <property type="entry name" value="Pyrim_hydro_RihA"/>
</dbReference>
<dbReference type="InterPro" id="IPR036452">
    <property type="entry name" value="Ribo_hydro-like"/>
</dbReference>
<dbReference type="NCBIfam" id="NF007761">
    <property type="entry name" value="PRK10443.1"/>
    <property type="match status" value="1"/>
</dbReference>
<dbReference type="PANTHER" id="PTHR12304">
    <property type="entry name" value="INOSINE-URIDINE PREFERRING NUCLEOSIDE HYDROLASE"/>
    <property type="match status" value="1"/>
</dbReference>
<dbReference type="PANTHER" id="PTHR12304:SF4">
    <property type="entry name" value="URIDINE NUCLEOSIDASE"/>
    <property type="match status" value="1"/>
</dbReference>
<dbReference type="Pfam" id="PF01156">
    <property type="entry name" value="IU_nuc_hydro"/>
    <property type="match status" value="1"/>
</dbReference>
<dbReference type="SUPFAM" id="SSF53590">
    <property type="entry name" value="Nucleoside hydrolase"/>
    <property type="match status" value="1"/>
</dbReference>
<dbReference type="PROSITE" id="PS01247">
    <property type="entry name" value="IUNH"/>
    <property type="match status" value="1"/>
</dbReference>
<organism>
    <name type="scientific">Escherichia coli O17:K52:H18 (strain UMN026 / ExPEC)</name>
    <dbReference type="NCBI Taxonomy" id="585056"/>
    <lineage>
        <taxon>Bacteria</taxon>
        <taxon>Pseudomonadati</taxon>
        <taxon>Pseudomonadota</taxon>
        <taxon>Gammaproteobacteria</taxon>
        <taxon>Enterobacterales</taxon>
        <taxon>Enterobacteriaceae</taxon>
        <taxon>Escherichia</taxon>
    </lineage>
</organism>
<comment type="function">
    <text evidence="1">Hydrolyzes with equal efficiency cytidine or uridine to ribose and cytosine or uracil, respectively.</text>
</comment>
<comment type="similarity">
    <text evidence="1">Belongs to the IUNH family. RihA subfamily.</text>
</comment>